<organism>
    <name type="scientific">Haemophilus influenzae (strain ATCC 51907 / DSM 11121 / KW20 / Rd)</name>
    <dbReference type="NCBI Taxonomy" id="71421"/>
    <lineage>
        <taxon>Bacteria</taxon>
        <taxon>Pseudomonadati</taxon>
        <taxon>Pseudomonadota</taxon>
        <taxon>Gammaproteobacteria</taxon>
        <taxon>Pasteurellales</taxon>
        <taxon>Pasteurellaceae</taxon>
        <taxon>Haemophilus</taxon>
    </lineage>
</organism>
<accession>P43958</accession>
<accession>P43959</accession>
<reference key="1">
    <citation type="journal article" date="1995" name="Science">
        <title>Whole-genome random sequencing and assembly of Haemophilus influenzae Rd.</title>
        <authorList>
            <person name="Fleischmann R.D."/>
            <person name="Adams M.D."/>
            <person name="White O."/>
            <person name="Clayton R.A."/>
            <person name="Kirkness E.F."/>
            <person name="Kerlavage A.R."/>
            <person name="Bult C.J."/>
            <person name="Tomb J.-F."/>
            <person name="Dougherty B.A."/>
            <person name="Merrick J.M."/>
            <person name="McKenney K."/>
            <person name="Sutton G.G."/>
            <person name="FitzHugh W."/>
            <person name="Fields C.A."/>
            <person name="Gocayne J.D."/>
            <person name="Scott J.D."/>
            <person name="Shirley R."/>
            <person name="Liu L.-I."/>
            <person name="Glodek A."/>
            <person name="Kelley J.M."/>
            <person name="Weidman J.F."/>
            <person name="Phillips C.A."/>
            <person name="Spriggs T."/>
            <person name="Hedblom E."/>
            <person name="Cotton M.D."/>
            <person name="Utterback T.R."/>
            <person name="Hanna M.C."/>
            <person name="Nguyen D.T."/>
            <person name="Saudek D.M."/>
            <person name="Brandon R.C."/>
            <person name="Fine L.D."/>
            <person name="Fritchman J.L."/>
            <person name="Fuhrmann J.L."/>
            <person name="Geoghagen N.S.M."/>
            <person name="Gnehm C.L."/>
            <person name="McDonald L.A."/>
            <person name="Small K.V."/>
            <person name="Fraser C.M."/>
            <person name="Smith H.O."/>
            <person name="Venter J.C."/>
        </authorList>
    </citation>
    <scope>NUCLEOTIDE SEQUENCE [LARGE SCALE GENOMIC DNA]</scope>
    <source>
        <strain>ATCC 51907 / DSM 11121 / KW20 / Rd</strain>
    </source>
</reference>
<reference key="2">
    <citation type="submission" date="1996-09" db="EMBL/GenBank/DDBJ databases">
        <authorList>
            <person name="White O."/>
            <person name="Clayton R.A."/>
            <person name="Kerlavage A.R."/>
            <person name="Fleischmann R.D."/>
        </authorList>
    </citation>
    <scope>SEQUENCE REVISION</scope>
</reference>
<reference key="3">
    <citation type="journal article" date="1996" name="FEBS Lett.">
        <title>Existence of Na+-translocating NADH-quinone reductase in Haemophilus influenzae.</title>
        <authorList>
            <person name="Hayashi M."/>
            <person name="Nakayama Y."/>
            <person name="Unemoto T."/>
        </authorList>
    </citation>
    <scope>IDENTIFICATION AS NQR SYSTEM</scope>
    <source>
        <strain>ATCC 51907 / DSM 11121 / KW20 / Rd</strain>
    </source>
</reference>
<dbReference type="EC" id="7.2.1.1" evidence="1"/>
<dbReference type="EMBL" id="L42023">
    <property type="protein sequence ID" value="AAC21839.1"/>
    <property type="molecule type" value="Genomic_DNA"/>
</dbReference>
<dbReference type="PIR" id="C64003">
    <property type="entry name" value="C64003"/>
</dbReference>
<dbReference type="PIR" id="D64003">
    <property type="entry name" value="D64003"/>
</dbReference>
<dbReference type="RefSeq" id="NP_438337.1">
    <property type="nucleotide sequence ID" value="NC_000907.1"/>
</dbReference>
<dbReference type="SMR" id="P43958"/>
<dbReference type="STRING" id="71421.HI_0168"/>
<dbReference type="EnsemblBacteria" id="AAC21839">
    <property type="protein sequence ID" value="AAC21839"/>
    <property type="gene ID" value="HI_0168"/>
</dbReference>
<dbReference type="KEGG" id="hin:HI_0168"/>
<dbReference type="PATRIC" id="fig|71421.8.peg.173"/>
<dbReference type="eggNOG" id="COG1347">
    <property type="taxonomic scope" value="Bacteria"/>
</dbReference>
<dbReference type="HOGENOM" id="CLU_046659_1_1_6"/>
<dbReference type="OrthoDB" id="9782945at2"/>
<dbReference type="PhylomeDB" id="P43958"/>
<dbReference type="BioCyc" id="HINF71421:G1GJ1-179-MONOMER"/>
<dbReference type="Proteomes" id="UP000000579">
    <property type="component" value="Chromosome"/>
</dbReference>
<dbReference type="GO" id="GO:0005886">
    <property type="term" value="C:plasma membrane"/>
    <property type="evidence" value="ECO:0000318"/>
    <property type="project" value="GO_Central"/>
</dbReference>
<dbReference type="GO" id="GO:0016655">
    <property type="term" value="F:oxidoreductase activity, acting on NAD(P)H, quinone or similar compound as acceptor"/>
    <property type="evidence" value="ECO:0007669"/>
    <property type="project" value="UniProtKB-UniRule"/>
</dbReference>
<dbReference type="GO" id="GO:0006814">
    <property type="term" value="P:sodium ion transport"/>
    <property type="evidence" value="ECO:0007669"/>
    <property type="project" value="UniProtKB-UniRule"/>
</dbReference>
<dbReference type="HAMAP" id="MF_00428">
    <property type="entry name" value="NqrD"/>
    <property type="match status" value="1"/>
</dbReference>
<dbReference type="InterPro" id="IPR011292">
    <property type="entry name" value="NqrD"/>
</dbReference>
<dbReference type="InterPro" id="IPR003667">
    <property type="entry name" value="NqrDE/RnfAE"/>
</dbReference>
<dbReference type="NCBIfam" id="TIGR01939">
    <property type="entry name" value="nqrD"/>
    <property type="match status" value="1"/>
</dbReference>
<dbReference type="NCBIfam" id="NF006777">
    <property type="entry name" value="PRK09292.1"/>
    <property type="match status" value="1"/>
</dbReference>
<dbReference type="NCBIfam" id="NF009070">
    <property type="entry name" value="PRK12405.1"/>
    <property type="match status" value="1"/>
</dbReference>
<dbReference type="PANTHER" id="PTHR30586">
    <property type="entry name" value="ELECTRON TRANSPORT COMPLEX PROTEIN RNFE"/>
    <property type="match status" value="1"/>
</dbReference>
<dbReference type="PANTHER" id="PTHR30586:SF1">
    <property type="entry name" value="NA(+)-TRANSLOCATING NADH-QUINONE REDUCTASE SUBUNIT D"/>
    <property type="match status" value="1"/>
</dbReference>
<dbReference type="Pfam" id="PF02508">
    <property type="entry name" value="Rnf-Nqr"/>
    <property type="match status" value="1"/>
</dbReference>
<dbReference type="PIRSF" id="PIRSF006102">
    <property type="entry name" value="NQR_DE"/>
    <property type="match status" value="1"/>
</dbReference>
<protein>
    <recommendedName>
        <fullName evidence="1">Na(+)-translocating NADH-quinone reductase subunit D</fullName>
        <shortName evidence="1">Na(+)-NQR subunit D</shortName>
        <shortName evidence="1">Na(+)-translocating NQR subunit D</shortName>
        <ecNumber evidence="1">7.2.1.1</ecNumber>
    </recommendedName>
    <alternativeName>
        <fullName evidence="1">NQR complex subunit D</fullName>
    </alternativeName>
    <alternativeName>
        <fullName evidence="1">NQR-1 subunit D</fullName>
    </alternativeName>
</protein>
<evidence type="ECO:0000255" key="1">
    <source>
        <dbReference type="HAMAP-Rule" id="MF_00428"/>
    </source>
</evidence>
<feature type="chain" id="PRO_0000214234" description="Na(+)-translocating NADH-quinone reductase subunit D">
    <location>
        <begin position="1"/>
        <end position="208"/>
    </location>
</feature>
<feature type="transmembrane region" description="Helical" evidence="1">
    <location>
        <begin position="42"/>
        <end position="62"/>
    </location>
</feature>
<feature type="transmembrane region" description="Helical" evidence="1">
    <location>
        <begin position="72"/>
        <end position="92"/>
    </location>
</feature>
<feature type="transmembrane region" description="Helical" evidence="1">
    <location>
        <begin position="103"/>
        <end position="123"/>
    </location>
</feature>
<feature type="transmembrane region" description="Helical" evidence="1">
    <location>
        <begin position="131"/>
        <end position="151"/>
    </location>
</feature>
<feature type="transmembrane region" description="Helical" evidence="1">
    <location>
        <begin position="178"/>
        <end position="198"/>
    </location>
</feature>
<name>NQRD_HAEIN</name>
<keyword id="KW-0997">Cell inner membrane</keyword>
<keyword id="KW-1003">Cell membrane</keyword>
<keyword id="KW-0406">Ion transport</keyword>
<keyword id="KW-0472">Membrane</keyword>
<keyword id="KW-0520">NAD</keyword>
<keyword id="KW-1185">Reference proteome</keyword>
<keyword id="KW-0915">Sodium</keyword>
<keyword id="KW-0739">Sodium transport</keyword>
<keyword id="KW-1278">Translocase</keyword>
<keyword id="KW-0812">Transmembrane</keyword>
<keyword id="KW-1133">Transmembrane helix</keyword>
<keyword id="KW-0813">Transport</keyword>
<keyword id="KW-0830">Ubiquinone</keyword>
<comment type="function">
    <text evidence="1">NQR complex catalyzes the reduction of ubiquinone-1 to ubiquinol by two successive reactions, coupled with the transport of Na(+) ions from the cytoplasm to the periplasm. NqrA to NqrE are probably involved in the second step, the conversion of ubisemiquinone to ubiquinol.</text>
</comment>
<comment type="catalytic activity">
    <reaction evidence="1">
        <text>a ubiquinone + n Na(+)(in) + NADH + H(+) = a ubiquinol + n Na(+)(out) + NAD(+)</text>
        <dbReference type="Rhea" id="RHEA:47748"/>
        <dbReference type="Rhea" id="RHEA-COMP:9565"/>
        <dbReference type="Rhea" id="RHEA-COMP:9566"/>
        <dbReference type="ChEBI" id="CHEBI:15378"/>
        <dbReference type="ChEBI" id="CHEBI:16389"/>
        <dbReference type="ChEBI" id="CHEBI:17976"/>
        <dbReference type="ChEBI" id="CHEBI:29101"/>
        <dbReference type="ChEBI" id="CHEBI:57540"/>
        <dbReference type="ChEBI" id="CHEBI:57945"/>
        <dbReference type="EC" id="7.2.1.1"/>
    </reaction>
</comment>
<comment type="subunit">
    <text evidence="1">Composed of six subunits; NqrA, NqrB, NqrC, NqrD, NqrE and NqrF.</text>
</comment>
<comment type="subcellular location">
    <subcellularLocation>
        <location evidence="1">Cell inner membrane</location>
        <topology evidence="1">Multi-pass membrane protein</topology>
    </subcellularLocation>
</comment>
<comment type="similarity">
    <text evidence="1">Belongs to the NqrDE/RnfAE family.</text>
</comment>
<gene>
    <name evidence="1" type="primary">nqrD</name>
    <name type="ordered locus">HI_0168</name>
</gene>
<proteinExistence type="inferred from homology"/>
<sequence length="208" mass="22528">MSGKTSYKDLLLAPIAKNNPIALQILGICSALAVTTKLETAFVMAIAVTLVTGLSNLFVSLIRNYIPNSIRIIVQLAIIASLVIVVDQILKAYAYGLSKQLSVFVGLIITNCIVMGRAEAFAMKSPPVESFVDGIGNGLGYGSMLIIVAFFRELIGSGKLFGMTIFETIQNGGWYQANGLFLLAPSAFFIIGFVIWGLRTWKPEQQEK</sequence>